<evidence type="ECO:0000255" key="1">
    <source>
        <dbReference type="HAMAP-Rule" id="MF_01181"/>
    </source>
</evidence>
<organism>
    <name type="scientific">Enterobacter sp. (strain 638)</name>
    <dbReference type="NCBI Taxonomy" id="399742"/>
    <lineage>
        <taxon>Bacteria</taxon>
        <taxon>Pseudomonadati</taxon>
        <taxon>Pseudomonadota</taxon>
        <taxon>Gammaproteobacteria</taxon>
        <taxon>Enterobacterales</taxon>
        <taxon>Enterobacteriaceae</taxon>
        <taxon>Enterobacter</taxon>
    </lineage>
</organism>
<comment type="function">
    <text evidence="1">Binds RpoD and negatively regulates RpoD-mediated transcription activation by preventing the interaction between the primary sigma factor RpoD with the catalytic core of the RNA polymerase and with promoter DNA. May be involved in replacement of the RNA polymerase sigma subunit from RpoD to RpoS during the transition from exponential growth to the stationary phase.</text>
</comment>
<comment type="subunit">
    <text evidence="1">Interacts with RpoD.</text>
</comment>
<comment type="subcellular location">
    <subcellularLocation>
        <location evidence="1">Cytoplasm</location>
    </subcellularLocation>
</comment>
<comment type="similarity">
    <text evidence="1">Belongs to the Rsd/AlgQ family.</text>
</comment>
<sequence length="165" mass="18928">MLNQLESLTERVGGSNKLVDRWLHVRKQLLVAYYNLVGIKPGKESYMRLNEKALDNFCQSLVDYLSDGHFNIYERIIREMEGTNPYLAATKLYPQLEANTQQIMDYYDSTLENAIDQDNYLEFQQALSDLGEALEGRFTLEDKLIALALDNNLKASNEDNVARPA</sequence>
<reference key="1">
    <citation type="journal article" date="2010" name="PLoS Genet.">
        <title>Genome sequence of the plant growth promoting endophytic bacterium Enterobacter sp. 638.</title>
        <authorList>
            <person name="Taghavi S."/>
            <person name="van der Lelie D."/>
            <person name="Hoffman A."/>
            <person name="Zhang Y.B."/>
            <person name="Walla M.D."/>
            <person name="Vangronsveld J."/>
            <person name="Newman L."/>
            <person name="Monchy S."/>
        </authorList>
    </citation>
    <scope>NUCLEOTIDE SEQUENCE [LARGE SCALE GENOMIC DNA]</scope>
    <source>
        <strain>638</strain>
    </source>
</reference>
<gene>
    <name evidence="1" type="primary">rsd</name>
    <name type="ordered locus">Ent638_0208</name>
</gene>
<dbReference type="EMBL" id="CP000653">
    <property type="protein sequence ID" value="ABP58898.1"/>
    <property type="molecule type" value="Genomic_DNA"/>
</dbReference>
<dbReference type="RefSeq" id="WP_011915472.1">
    <property type="nucleotide sequence ID" value="NC_009436.1"/>
</dbReference>
<dbReference type="SMR" id="A4W5B8"/>
<dbReference type="STRING" id="399742.Ent638_0208"/>
<dbReference type="KEGG" id="ent:Ent638_0208"/>
<dbReference type="eggNOG" id="COG3160">
    <property type="taxonomic scope" value="Bacteria"/>
</dbReference>
<dbReference type="HOGENOM" id="CLU_142729_0_0_6"/>
<dbReference type="OrthoDB" id="5567237at2"/>
<dbReference type="Proteomes" id="UP000000230">
    <property type="component" value="Chromosome"/>
</dbReference>
<dbReference type="GO" id="GO:0005737">
    <property type="term" value="C:cytoplasm"/>
    <property type="evidence" value="ECO:0007669"/>
    <property type="project" value="UniProtKB-SubCell"/>
</dbReference>
<dbReference type="GO" id="GO:0006355">
    <property type="term" value="P:regulation of DNA-templated transcription"/>
    <property type="evidence" value="ECO:0007669"/>
    <property type="project" value="InterPro"/>
</dbReference>
<dbReference type="Gene3D" id="1.20.120.1370">
    <property type="entry name" value="Regulator of RNA polymerase sigma(70) subunit, domain 4"/>
    <property type="match status" value="1"/>
</dbReference>
<dbReference type="HAMAP" id="MF_01181">
    <property type="entry name" value="Rsd"/>
    <property type="match status" value="1"/>
</dbReference>
<dbReference type="InterPro" id="IPR038309">
    <property type="entry name" value="Rsd/AlgQ_sf"/>
</dbReference>
<dbReference type="InterPro" id="IPR023785">
    <property type="entry name" value="Sigma70_reg_Rsd"/>
</dbReference>
<dbReference type="InterPro" id="IPR007448">
    <property type="entry name" value="Sigma70_reg_Rsd_AlgQ"/>
</dbReference>
<dbReference type="NCBIfam" id="NF008723">
    <property type="entry name" value="PRK11718.1"/>
    <property type="match status" value="1"/>
</dbReference>
<dbReference type="Pfam" id="PF04353">
    <property type="entry name" value="Rsd_AlgQ"/>
    <property type="match status" value="1"/>
</dbReference>
<dbReference type="PIRSF" id="PIRSF016548">
    <property type="entry name" value="Rsd_AlgQ"/>
    <property type="match status" value="1"/>
</dbReference>
<accession>A4W5B8</accession>
<name>RSD_ENT38</name>
<keyword id="KW-0963">Cytoplasm</keyword>
<keyword id="KW-0804">Transcription</keyword>
<keyword id="KW-0805">Transcription regulation</keyword>
<protein>
    <recommendedName>
        <fullName evidence="1">Regulator of sigma D</fullName>
    </recommendedName>
</protein>
<feature type="chain" id="PRO_1000065796" description="Regulator of sigma D">
    <location>
        <begin position="1"/>
        <end position="165"/>
    </location>
</feature>
<proteinExistence type="inferred from homology"/>